<comment type="function">
    <text evidence="3">Has dehydrogenase activity against 11 beta-hydroxysteroid and 17 beta-hydroxysteroid. May be involved in signal transduction regulated by various sterols.</text>
</comment>
<comment type="catalytic activity">
    <reaction evidence="3">
        <text>an 11beta-hydroxysteroid + NADP(+) = an 11-oxosteroid + NADPH + H(+)</text>
        <dbReference type="Rhea" id="RHEA:11388"/>
        <dbReference type="ChEBI" id="CHEBI:15378"/>
        <dbReference type="ChEBI" id="CHEBI:35346"/>
        <dbReference type="ChEBI" id="CHEBI:47787"/>
        <dbReference type="ChEBI" id="CHEBI:57783"/>
        <dbReference type="ChEBI" id="CHEBI:58349"/>
        <dbReference type="EC" id="1.1.1.146"/>
    </reaction>
</comment>
<comment type="subcellular location">
    <subcellularLocation>
        <location evidence="7">Lipid droplet</location>
    </subcellularLocation>
    <subcellularLocation>
        <location evidence="4">Membrane</location>
        <topology evidence="10">Single-pass type II membrane protein</topology>
    </subcellularLocation>
    <text evidence="10">Surface of oil bodies. Exists at a monolayer lipid/water interface.</text>
</comment>
<comment type="tissue specificity">
    <text evidence="7">Expressed in seeds (at protein level).</text>
</comment>
<comment type="domain">
    <text evidence="3">The proline-knob motif may be involved in the targeting to oil bodies.</text>
</comment>
<comment type="similarity">
    <text evidence="6">Belongs to the short-chain dehydrogenases/reductases (SDR) family.</text>
</comment>
<organism evidence="11">
    <name type="scientific">Arachis hypogaea</name>
    <name type="common">Peanut</name>
    <dbReference type="NCBI Taxonomy" id="3818"/>
    <lineage>
        <taxon>Eukaryota</taxon>
        <taxon>Viridiplantae</taxon>
        <taxon>Streptophyta</taxon>
        <taxon>Embryophyta</taxon>
        <taxon>Tracheophyta</taxon>
        <taxon>Spermatophyta</taxon>
        <taxon>Magnoliopsida</taxon>
        <taxon>eudicotyledons</taxon>
        <taxon>Gunneridae</taxon>
        <taxon>Pentapetalae</taxon>
        <taxon>rosids</taxon>
        <taxon>fabids</taxon>
        <taxon>Fabales</taxon>
        <taxon>Fabaceae</taxon>
        <taxon>Papilionoideae</taxon>
        <taxon>50 kb inversion clade</taxon>
        <taxon>dalbergioids sensu lato</taxon>
        <taxon>Dalbergieae</taxon>
        <taxon>Pterocarpus clade</taxon>
        <taxon>Arachis</taxon>
    </lineage>
</organism>
<dbReference type="EC" id="1.1.1.146" evidence="3"/>
<dbReference type="EC" id="1.1.1.-" evidence="3"/>
<dbReference type="EMBL" id="EF695404">
    <property type="protein sequence ID" value="ABS28874.1"/>
    <property type="molecule type" value="mRNA"/>
</dbReference>
<dbReference type="EMBL" id="EU250375">
    <property type="protein sequence ID" value="ABX38844.1"/>
    <property type="molecule type" value="Genomic_DNA"/>
</dbReference>
<dbReference type="SMR" id="A7LB60"/>
<dbReference type="EnsemblPlants" id="arahy.Tifrunner.gnm2.ann2.Ah03g387700.1">
    <property type="protein sequence ID" value="arahy.Tifrunner.gnm2.ann2.Ah03g387700.1-CDS"/>
    <property type="gene ID" value="arahy.Tifrunner.gnm2.ann2.Ah03g387700"/>
</dbReference>
<dbReference type="Gramene" id="arahy.Tifrunner.gnm2.ann2.Ah03g387700.1">
    <property type="protein sequence ID" value="arahy.Tifrunner.gnm2.ann2.Ah03g387700.1-CDS"/>
    <property type="gene ID" value="arahy.Tifrunner.gnm2.ann2.Ah03g387700"/>
</dbReference>
<dbReference type="OrthoDB" id="47007at2759"/>
<dbReference type="GO" id="GO:0005829">
    <property type="term" value="C:cytosol"/>
    <property type="evidence" value="ECO:0007669"/>
    <property type="project" value="TreeGrafter"/>
</dbReference>
<dbReference type="GO" id="GO:0005811">
    <property type="term" value="C:lipid droplet"/>
    <property type="evidence" value="ECO:0007669"/>
    <property type="project" value="UniProtKB-SubCell"/>
</dbReference>
<dbReference type="GO" id="GO:0016020">
    <property type="term" value="C:membrane"/>
    <property type="evidence" value="ECO:0007669"/>
    <property type="project" value="UniProtKB-SubCell"/>
</dbReference>
<dbReference type="GO" id="GO:0070524">
    <property type="term" value="F:11-beta-hydroxysteroid dehydrogenase (NADP+) activity"/>
    <property type="evidence" value="ECO:0007669"/>
    <property type="project" value="UniProtKB-EC"/>
</dbReference>
<dbReference type="GO" id="GO:0072582">
    <property type="term" value="F:17-beta-hydroxysteroid dehydrogenase (NADP+) activity"/>
    <property type="evidence" value="ECO:0007669"/>
    <property type="project" value="TreeGrafter"/>
</dbReference>
<dbReference type="GO" id="GO:0008202">
    <property type="term" value="P:steroid metabolic process"/>
    <property type="evidence" value="ECO:0007669"/>
    <property type="project" value="TreeGrafter"/>
</dbReference>
<dbReference type="Gene3D" id="3.40.50.720">
    <property type="entry name" value="NAD(P)-binding Rossmann-like Domain"/>
    <property type="match status" value="1"/>
</dbReference>
<dbReference type="InterPro" id="IPR036291">
    <property type="entry name" value="NAD(P)-bd_dom_sf"/>
</dbReference>
<dbReference type="InterPro" id="IPR020904">
    <property type="entry name" value="Sc_DH/Rdtase_CS"/>
</dbReference>
<dbReference type="InterPro" id="IPR002347">
    <property type="entry name" value="SDR_fam"/>
</dbReference>
<dbReference type="NCBIfam" id="NF004825">
    <property type="entry name" value="PRK06181.1"/>
    <property type="match status" value="1"/>
</dbReference>
<dbReference type="PANTHER" id="PTHR43391:SF89">
    <property type="entry name" value="11-BETA-HYDROXYSTEROID DEHYDROGENASE 1A-RELATED"/>
    <property type="match status" value="1"/>
</dbReference>
<dbReference type="PANTHER" id="PTHR43391">
    <property type="entry name" value="RETINOL DEHYDROGENASE-RELATED"/>
    <property type="match status" value="1"/>
</dbReference>
<dbReference type="Pfam" id="PF00106">
    <property type="entry name" value="adh_short"/>
    <property type="match status" value="1"/>
</dbReference>
<dbReference type="PRINTS" id="PR00081">
    <property type="entry name" value="GDHRDH"/>
</dbReference>
<dbReference type="PRINTS" id="PR00080">
    <property type="entry name" value="SDRFAMILY"/>
</dbReference>
<dbReference type="SUPFAM" id="SSF51735">
    <property type="entry name" value="NAD(P)-binding Rossmann-fold domains"/>
    <property type="match status" value="1"/>
</dbReference>
<dbReference type="PROSITE" id="PS00061">
    <property type="entry name" value="ADH_SHORT"/>
    <property type="match status" value="1"/>
</dbReference>
<feature type="chain" id="PRO_0000449960" description="11-beta-hydroxysteroid dehydrogenase A">
    <location>
        <begin position="1"/>
        <end position="349"/>
    </location>
</feature>
<feature type="transmembrane region" description="Helical; Signal-anchor for type II membrane protein" evidence="4">
    <location>
        <begin position="10"/>
        <end position="30"/>
    </location>
</feature>
<feature type="short sequence motif" description="Proline-knob" evidence="3">
    <location>
        <begin position="13"/>
        <end position="26"/>
    </location>
</feature>
<feature type="active site" description="Proton acceptor" evidence="5">
    <location>
        <position position="197"/>
    </location>
</feature>
<feature type="binding site" evidence="1">
    <location>
        <begin position="54"/>
        <end position="80"/>
    </location>
    <ligand>
        <name>NADP(+)</name>
        <dbReference type="ChEBI" id="CHEBI:58349"/>
    </ligand>
</feature>
<feature type="binding site" evidence="1">
    <location>
        <position position="105"/>
    </location>
    <ligand>
        <name>NADP(+)</name>
        <dbReference type="ChEBI" id="CHEBI:58349"/>
    </ligand>
</feature>
<feature type="binding site" evidence="2">
    <location>
        <begin position="132"/>
        <end position="135"/>
    </location>
    <ligand>
        <name>NADP(+)</name>
        <dbReference type="ChEBI" id="CHEBI:58349"/>
    </ligand>
</feature>
<feature type="binding site" evidence="2">
    <location>
        <position position="184"/>
    </location>
    <ligand>
        <name>substrate</name>
    </ligand>
</feature>
<feature type="binding site" evidence="2">
    <location>
        <begin position="197"/>
        <end position="201"/>
    </location>
    <ligand>
        <name>NADP(+)</name>
        <dbReference type="ChEBI" id="CHEBI:58349"/>
    </ligand>
</feature>
<feature type="binding site" evidence="1">
    <location>
        <position position="201"/>
    </location>
    <ligand>
        <name>NADP(+)</name>
        <dbReference type="ChEBI" id="CHEBI:58349"/>
    </ligand>
</feature>
<keyword id="KW-0903">Direct protein sequencing</keyword>
<keyword id="KW-0551">Lipid droplet</keyword>
<keyword id="KW-0472">Membrane</keyword>
<keyword id="KW-0521">NADP</keyword>
<keyword id="KW-0560">Oxidoreductase</keyword>
<keyword id="KW-0735">Signal-anchor</keyword>
<keyword id="KW-0812">Transmembrane</keyword>
<keyword id="KW-1133">Transmembrane helix</keyword>
<protein>
    <recommendedName>
        <fullName evidence="10">11-beta-hydroxysteroid dehydrogenase A</fullName>
        <ecNumber evidence="3">1.1.1.146</ecNumber>
    </recommendedName>
    <alternativeName>
        <fullName evidence="10">17-beta-hydroxysteroid dehydrogenase A</fullName>
        <ecNumber evidence="3">1.1.1.-</ecNumber>
    </alternativeName>
    <alternativeName>
        <fullName evidence="8 11 12">Steroleosin-A</fullName>
    </alternativeName>
</protein>
<reference evidence="11" key="1">
    <citation type="submission" date="2007-06" db="EMBL/GenBank/DDBJ databases">
        <title>Cloning and characterization of two genes encoding peanut seed steroleosins.</title>
        <authorList>
            <person name="Fu G."/>
            <person name="Li C."/>
            <person name="Wang L."/>
            <person name="Huang S."/>
        </authorList>
    </citation>
    <scope>NUCLEOTIDE SEQUENCE [MRNA]</scope>
    <source>
        <strain evidence="9">cv. Shanyou 523</strain>
    </source>
</reference>
<reference evidence="12" key="2">
    <citation type="submission" date="2007-10" db="EMBL/GenBank/DDBJ databases">
        <title>Cloning and characterization of one novel gene encoding peanut steroleosin.</title>
        <authorList>
            <person name="Fu G."/>
            <person name="Li C."/>
            <person name="Zhong Y."/>
            <person name="Yan Y."/>
            <person name="Wang L."/>
            <person name="Huang S."/>
        </authorList>
    </citation>
    <scope>NUCLEOTIDE SEQUENCE [GENOMIC DNA]</scope>
</reference>
<reference key="3">
    <citation type="journal article" date="2015" name="PLoS ONE">
        <title>Development of a novel strategy to isolate lipophilic allergens (oleosins) from peanuts.</title>
        <authorList>
            <person name="Schwager C."/>
            <person name="Kull S."/>
            <person name="Krause S."/>
            <person name="Schocker F."/>
            <person name="Petersen A."/>
            <person name="Becker W.M."/>
            <person name="Jappe U."/>
        </authorList>
    </citation>
    <scope>PROTEIN SEQUENCE OF 1-10; 49-70; 81-92; 93-103; 115-125; 167-173; 202-212; 238-252; 308-324 AND 334-347</scope>
    <scope>SUBCELLULAR LOCATION</scope>
    <scope>TISSUE SPECIFICITY</scope>
    <scope>IDENTIFICATION BY MASS SPECTROMETRY</scope>
    <source>
        <tissue evidence="7">Seed</tissue>
    </source>
</reference>
<evidence type="ECO:0000250" key="1">
    <source>
        <dbReference type="UniProtKB" id="P14061"/>
    </source>
</evidence>
<evidence type="ECO:0000250" key="2">
    <source>
        <dbReference type="UniProtKB" id="P28845"/>
    </source>
</evidence>
<evidence type="ECO:0000250" key="3">
    <source>
        <dbReference type="UniProtKB" id="Q93W57"/>
    </source>
</evidence>
<evidence type="ECO:0000255" key="4"/>
<evidence type="ECO:0000255" key="5">
    <source>
        <dbReference type="PROSITE-ProRule" id="PRU10001"/>
    </source>
</evidence>
<evidence type="ECO:0000255" key="6">
    <source>
        <dbReference type="RuleBase" id="RU000363"/>
    </source>
</evidence>
<evidence type="ECO:0000269" key="7">
    <source>
    </source>
</evidence>
<evidence type="ECO:0000303" key="8">
    <source>
    </source>
</evidence>
<evidence type="ECO:0000303" key="9">
    <source ref="1"/>
</evidence>
<evidence type="ECO:0000305" key="10"/>
<evidence type="ECO:0000312" key="11">
    <source>
        <dbReference type="EMBL" id="ABS28874.1"/>
    </source>
</evidence>
<evidence type="ECO:0000312" key="12">
    <source>
        <dbReference type="EMBL" id="ABX38844.1"/>
    </source>
</evidence>
<accession>A7LB60</accession>
<proteinExistence type="evidence at protein level"/>
<sequence>MDLIHTFLNLVAPPFTFFFLCLFLPPYWGLKFMVSILSWLLSENVAGKVVHITGASSGIGEYLAYEYAKRGACLALSARRETALHQVADTARHLGSPDVIVMRADVSKPEDCMRLIDQTVNHFGRLDHLVNNAAISIATLFEETPDISNLRPIMETNFWGSVYTTRYALQHLRKSRGKIVVMSSVDSWLPAPRRHIYSASKAALVSLYETLRVEVGSEIGITIVTPGYIESEITKGKFLSAQGEVDVDQDLRDVEVSAVPVGSVSGCAESIIKSTLRGDRCLTVPSWFRMTYLIKLLCPELLEWTFRLLYLTAPGTPTSDALSKKILDATGAKNLFYPPSIQSPDVKTD</sequence>
<name>HSDA_ARAHY</name>
<gene>
    <name evidence="11" type="primary">STO-A</name>
</gene>